<keyword id="KW-0067">ATP-binding</keyword>
<keyword id="KW-0143">Chaperone</keyword>
<keyword id="KW-0547">Nucleotide-binding</keyword>
<keyword id="KW-0597">Phosphoprotein</keyword>
<keyword id="KW-1185">Reference proteome</keyword>
<keyword id="KW-0346">Stress response</keyword>
<accession>Q5NPS6</accession>
<protein>
    <recommendedName>
        <fullName evidence="1">Chaperone protein DnaK</fullName>
    </recommendedName>
    <alternativeName>
        <fullName evidence="1">HSP70</fullName>
    </alternativeName>
    <alternativeName>
        <fullName evidence="1">Heat shock 70 kDa protein</fullName>
    </alternativeName>
    <alternativeName>
        <fullName evidence="1">Heat shock protein 70</fullName>
    </alternativeName>
</protein>
<gene>
    <name evidence="1" type="primary">dnaK</name>
    <name type="ordered locus">ZMO0660</name>
</gene>
<name>DNAK_ZYMMO</name>
<proteinExistence type="inferred from homology"/>
<comment type="function">
    <text evidence="1">Acts as a chaperone.</text>
</comment>
<comment type="induction">
    <text evidence="1">By stress conditions e.g. heat shock.</text>
</comment>
<comment type="similarity">
    <text evidence="1">Belongs to the heat shock protein 70 family.</text>
</comment>
<reference key="1">
    <citation type="journal article" date="2005" name="Nat. Biotechnol.">
        <title>The genome sequence of the ethanologenic bacterium Zymomonas mobilis ZM4.</title>
        <authorList>
            <person name="Seo J.-S."/>
            <person name="Chong H."/>
            <person name="Park H.S."/>
            <person name="Yoon K.-O."/>
            <person name="Jung C."/>
            <person name="Kim J.J."/>
            <person name="Hong J.H."/>
            <person name="Kim H."/>
            <person name="Kim J.-H."/>
            <person name="Kil J.-I."/>
            <person name="Park C.J."/>
            <person name="Oh H.-M."/>
            <person name="Lee J.-S."/>
            <person name="Jin S.-J."/>
            <person name="Um H.-W."/>
            <person name="Lee H.-J."/>
            <person name="Oh S.-J."/>
            <person name="Kim J.Y."/>
            <person name="Kang H.L."/>
            <person name="Lee S.Y."/>
            <person name="Lee K.J."/>
            <person name="Kang H.S."/>
        </authorList>
    </citation>
    <scope>NUCLEOTIDE SEQUENCE [LARGE SCALE GENOMIC DNA]</scope>
    <source>
        <strain>ATCC 31821 / ZM4 / CP4</strain>
    </source>
</reference>
<evidence type="ECO:0000255" key="1">
    <source>
        <dbReference type="HAMAP-Rule" id="MF_00332"/>
    </source>
</evidence>
<evidence type="ECO:0000256" key="2">
    <source>
        <dbReference type="SAM" id="MobiDB-lite"/>
    </source>
</evidence>
<dbReference type="EMBL" id="AE008692">
    <property type="protein sequence ID" value="AAV89284.1"/>
    <property type="molecule type" value="Genomic_DNA"/>
</dbReference>
<dbReference type="RefSeq" id="WP_011240553.1">
    <property type="nucleotide sequence ID" value="NZ_CP035711.1"/>
</dbReference>
<dbReference type="SMR" id="Q5NPS6"/>
<dbReference type="STRING" id="264203.ZMO0660"/>
<dbReference type="KEGG" id="zmo:ZMO0660"/>
<dbReference type="eggNOG" id="COG0443">
    <property type="taxonomic scope" value="Bacteria"/>
</dbReference>
<dbReference type="HOGENOM" id="CLU_005965_2_1_5"/>
<dbReference type="Proteomes" id="UP000001173">
    <property type="component" value="Chromosome"/>
</dbReference>
<dbReference type="GO" id="GO:0005524">
    <property type="term" value="F:ATP binding"/>
    <property type="evidence" value="ECO:0007669"/>
    <property type="project" value="UniProtKB-UniRule"/>
</dbReference>
<dbReference type="GO" id="GO:0140662">
    <property type="term" value="F:ATP-dependent protein folding chaperone"/>
    <property type="evidence" value="ECO:0007669"/>
    <property type="project" value="InterPro"/>
</dbReference>
<dbReference type="GO" id="GO:0051082">
    <property type="term" value="F:unfolded protein binding"/>
    <property type="evidence" value="ECO:0007669"/>
    <property type="project" value="InterPro"/>
</dbReference>
<dbReference type="CDD" id="cd11733">
    <property type="entry name" value="ASKHA_NBD_HSP70_HSPA9"/>
    <property type="match status" value="1"/>
</dbReference>
<dbReference type="FunFam" id="2.60.34.10:FF:000014">
    <property type="entry name" value="Chaperone protein DnaK HSP70"/>
    <property type="match status" value="1"/>
</dbReference>
<dbReference type="FunFam" id="3.30.420.40:FF:000020">
    <property type="entry name" value="Chaperone protein HscA homolog"/>
    <property type="match status" value="1"/>
</dbReference>
<dbReference type="FunFam" id="3.30.30.30:FF:000003">
    <property type="entry name" value="Heat shock protein 9"/>
    <property type="match status" value="1"/>
</dbReference>
<dbReference type="FunFam" id="1.20.1270.10:FF:000001">
    <property type="entry name" value="Molecular chaperone DnaK"/>
    <property type="match status" value="1"/>
</dbReference>
<dbReference type="FunFam" id="3.30.420.40:FF:000004">
    <property type="entry name" value="Molecular chaperone DnaK"/>
    <property type="match status" value="1"/>
</dbReference>
<dbReference type="FunFam" id="3.90.640.10:FF:000003">
    <property type="entry name" value="Molecular chaperone DnaK"/>
    <property type="match status" value="1"/>
</dbReference>
<dbReference type="Gene3D" id="1.20.1270.10">
    <property type="match status" value="1"/>
</dbReference>
<dbReference type="Gene3D" id="3.30.420.40">
    <property type="match status" value="2"/>
</dbReference>
<dbReference type="Gene3D" id="3.90.640.10">
    <property type="entry name" value="Actin, Chain A, domain 4"/>
    <property type="match status" value="1"/>
</dbReference>
<dbReference type="Gene3D" id="2.60.34.10">
    <property type="entry name" value="Substrate Binding Domain Of DNAk, Chain A, domain 1"/>
    <property type="match status" value="1"/>
</dbReference>
<dbReference type="HAMAP" id="MF_00332">
    <property type="entry name" value="DnaK"/>
    <property type="match status" value="1"/>
</dbReference>
<dbReference type="InterPro" id="IPR043129">
    <property type="entry name" value="ATPase_NBD"/>
</dbReference>
<dbReference type="InterPro" id="IPR012725">
    <property type="entry name" value="Chaperone_DnaK"/>
</dbReference>
<dbReference type="InterPro" id="IPR018181">
    <property type="entry name" value="Heat_shock_70_CS"/>
</dbReference>
<dbReference type="InterPro" id="IPR029048">
    <property type="entry name" value="HSP70_C_sf"/>
</dbReference>
<dbReference type="InterPro" id="IPR029047">
    <property type="entry name" value="HSP70_peptide-bd_sf"/>
</dbReference>
<dbReference type="InterPro" id="IPR013126">
    <property type="entry name" value="Hsp_70_fam"/>
</dbReference>
<dbReference type="NCBIfam" id="NF001413">
    <property type="entry name" value="PRK00290.1"/>
    <property type="match status" value="1"/>
</dbReference>
<dbReference type="NCBIfam" id="NF003520">
    <property type="entry name" value="PRK05183.1"/>
    <property type="match status" value="1"/>
</dbReference>
<dbReference type="NCBIfam" id="TIGR02350">
    <property type="entry name" value="prok_dnaK"/>
    <property type="match status" value="1"/>
</dbReference>
<dbReference type="PANTHER" id="PTHR19375">
    <property type="entry name" value="HEAT SHOCK PROTEIN 70KDA"/>
    <property type="match status" value="1"/>
</dbReference>
<dbReference type="Pfam" id="PF00012">
    <property type="entry name" value="HSP70"/>
    <property type="match status" value="1"/>
</dbReference>
<dbReference type="PRINTS" id="PR00301">
    <property type="entry name" value="HEATSHOCK70"/>
</dbReference>
<dbReference type="SUPFAM" id="SSF53067">
    <property type="entry name" value="Actin-like ATPase domain"/>
    <property type="match status" value="2"/>
</dbReference>
<dbReference type="SUPFAM" id="SSF100934">
    <property type="entry name" value="Heat shock protein 70kD (HSP70), C-terminal subdomain"/>
    <property type="match status" value="1"/>
</dbReference>
<dbReference type="SUPFAM" id="SSF100920">
    <property type="entry name" value="Heat shock protein 70kD (HSP70), peptide-binding domain"/>
    <property type="match status" value="1"/>
</dbReference>
<dbReference type="PROSITE" id="PS00297">
    <property type="entry name" value="HSP70_1"/>
    <property type="match status" value="1"/>
</dbReference>
<dbReference type="PROSITE" id="PS00329">
    <property type="entry name" value="HSP70_2"/>
    <property type="match status" value="1"/>
</dbReference>
<dbReference type="PROSITE" id="PS01036">
    <property type="entry name" value="HSP70_3"/>
    <property type="match status" value="1"/>
</dbReference>
<sequence>MGKVIGIDLGTTNSCVAVMEGGQPKVIENAEGARTTPSIVAFTKDSERLIGQPAKRQAVTNSENTIFAVKRLIGRRFDDPVTKRDTELVPYHIVRGSNGDAWVKAGGQDYSPSQISAFILQKMKETAESYLGETVDQAVITVPAYFNDAQRQATKDAGKIAGLEVLRIINEPTAAALAYGLDKNDGKTIAVYDLGGGTFDISILEIGDGVFEVKATNGDTFLGGEDFDTKIVSYLAEEFKKAEGIDLTKDRLALQRLKEAAEKAKIELSSAQTTEVNLPFITADATGPKHLVKTISRAELERLVADLIDRTLEPVKKALADAGVKASDIDDVVMVGGMTRMPKVRQVVKEFFGKEPHTGVNPDEVVAMGAAIQAGVLQGDVKDVLLLDVTPLSLGIETLGGVFTRMIDRNTTIPTKKSQVYSTAEDNQNAVTIRVFQGEREMAADNKLLGQFDLVGIPPAPRGVPQIEVTFDIDANGIVNVSAKDKGTGKEQQIRIQASGGLSEGDIDKMVKDAEKFAADDKHRRELAEAKNNGDSLVHTTERQLTELGDKVDAALKTEVEAAVAAVKTALEGEDVAQINEKTQALGQVAMKLGQALYEQDQANNERHDTPETEKAEGDNVVDAEFQEIDDQDKK</sequence>
<feature type="chain" id="PRO_0000226034" description="Chaperone protein DnaK">
    <location>
        <begin position="1"/>
        <end position="635"/>
    </location>
</feature>
<feature type="region of interest" description="Disordered" evidence="2">
    <location>
        <begin position="597"/>
        <end position="635"/>
    </location>
</feature>
<feature type="compositionally biased region" description="Basic and acidic residues" evidence="2">
    <location>
        <begin position="604"/>
        <end position="618"/>
    </location>
</feature>
<feature type="compositionally biased region" description="Acidic residues" evidence="2">
    <location>
        <begin position="620"/>
        <end position="635"/>
    </location>
</feature>
<feature type="modified residue" description="Phosphothreonine; by autocatalysis" evidence="1">
    <location>
        <position position="198"/>
    </location>
</feature>
<organism>
    <name type="scientific">Zymomonas mobilis subsp. mobilis (strain ATCC 31821 / ZM4 / CP4)</name>
    <dbReference type="NCBI Taxonomy" id="264203"/>
    <lineage>
        <taxon>Bacteria</taxon>
        <taxon>Pseudomonadati</taxon>
        <taxon>Pseudomonadota</taxon>
        <taxon>Alphaproteobacteria</taxon>
        <taxon>Sphingomonadales</taxon>
        <taxon>Zymomonadaceae</taxon>
        <taxon>Zymomonas</taxon>
    </lineage>
</organism>